<dbReference type="EC" id="3.5.4.16" evidence="2"/>
<dbReference type="EMBL" id="AE006468">
    <property type="protein sequence ID" value="AAL21097.1"/>
    <property type="molecule type" value="Genomic_DNA"/>
</dbReference>
<dbReference type="RefSeq" id="NP_461138.1">
    <property type="nucleotide sequence ID" value="NC_003197.2"/>
</dbReference>
<dbReference type="RefSeq" id="WP_001139611.1">
    <property type="nucleotide sequence ID" value="NC_003197.2"/>
</dbReference>
<dbReference type="SMR" id="P64209"/>
<dbReference type="STRING" id="99287.STM2193"/>
<dbReference type="PaxDb" id="99287-STM2193"/>
<dbReference type="GeneID" id="1253715"/>
<dbReference type="KEGG" id="stm:STM2193"/>
<dbReference type="PATRIC" id="fig|99287.12.peg.2320"/>
<dbReference type="HOGENOM" id="CLU_049768_3_2_6"/>
<dbReference type="OMA" id="CEHMCMS"/>
<dbReference type="PhylomeDB" id="P64209"/>
<dbReference type="BioCyc" id="SENT99287:STM2193-MONOMER"/>
<dbReference type="UniPathway" id="UPA00848">
    <property type="reaction ID" value="UER00151"/>
</dbReference>
<dbReference type="Proteomes" id="UP000001014">
    <property type="component" value="Chromosome"/>
</dbReference>
<dbReference type="GO" id="GO:0005737">
    <property type="term" value="C:cytoplasm"/>
    <property type="evidence" value="ECO:0000318"/>
    <property type="project" value="GO_Central"/>
</dbReference>
<dbReference type="GO" id="GO:0005525">
    <property type="term" value="F:GTP binding"/>
    <property type="evidence" value="ECO:0000318"/>
    <property type="project" value="GO_Central"/>
</dbReference>
<dbReference type="GO" id="GO:0003934">
    <property type="term" value="F:GTP cyclohydrolase I activity"/>
    <property type="evidence" value="ECO:0000318"/>
    <property type="project" value="GO_Central"/>
</dbReference>
<dbReference type="GO" id="GO:0008270">
    <property type="term" value="F:zinc ion binding"/>
    <property type="evidence" value="ECO:0000318"/>
    <property type="project" value="GO_Central"/>
</dbReference>
<dbReference type="GO" id="GO:0006730">
    <property type="term" value="P:one-carbon metabolic process"/>
    <property type="evidence" value="ECO:0007669"/>
    <property type="project" value="UniProtKB-UniRule"/>
</dbReference>
<dbReference type="GO" id="GO:0006729">
    <property type="term" value="P:tetrahydrobiopterin biosynthetic process"/>
    <property type="evidence" value="ECO:0000318"/>
    <property type="project" value="GO_Central"/>
</dbReference>
<dbReference type="GO" id="GO:0046654">
    <property type="term" value="P:tetrahydrofolate biosynthetic process"/>
    <property type="evidence" value="ECO:0007669"/>
    <property type="project" value="UniProtKB-UniRule"/>
</dbReference>
<dbReference type="CDD" id="cd00642">
    <property type="entry name" value="GTP_cyclohydro1"/>
    <property type="match status" value="1"/>
</dbReference>
<dbReference type="FunFam" id="1.10.286.10:FF:000002">
    <property type="entry name" value="GTP cyclohydrolase 1"/>
    <property type="match status" value="1"/>
</dbReference>
<dbReference type="FunFam" id="3.30.1130.10:FF:000001">
    <property type="entry name" value="GTP cyclohydrolase 1"/>
    <property type="match status" value="1"/>
</dbReference>
<dbReference type="Gene3D" id="1.10.286.10">
    <property type="match status" value="1"/>
</dbReference>
<dbReference type="Gene3D" id="3.30.1130.10">
    <property type="match status" value="1"/>
</dbReference>
<dbReference type="HAMAP" id="MF_00223">
    <property type="entry name" value="FolE"/>
    <property type="match status" value="1"/>
</dbReference>
<dbReference type="InterPro" id="IPR043133">
    <property type="entry name" value="GTP-CH-I_C/QueF"/>
</dbReference>
<dbReference type="InterPro" id="IPR043134">
    <property type="entry name" value="GTP-CH-I_N"/>
</dbReference>
<dbReference type="InterPro" id="IPR001474">
    <property type="entry name" value="GTP_CycHdrlase_I"/>
</dbReference>
<dbReference type="InterPro" id="IPR018234">
    <property type="entry name" value="GTP_CycHdrlase_I_CS"/>
</dbReference>
<dbReference type="InterPro" id="IPR020602">
    <property type="entry name" value="GTP_CycHdrlase_I_dom"/>
</dbReference>
<dbReference type="NCBIfam" id="TIGR00063">
    <property type="entry name" value="folE"/>
    <property type="match status" value="1"/>
</dbReference>
<dbReference type="NCBIfam" id="NF006824">
    <property type="entry name" value="PRK09347.1-1"/>
    <property type="match status" value="1"/>
</dbReference>
<dbReference type="NCBIfam" id="NF006825">
    <property type="entry name" value="PRK09347.1-2"/>
    <property type="match status" value="1"/>
</dbReference>
<dbReference type="NCBIfam" id="NF006826">
    <property type="entry name" value="PRK09347.1-3"/>
    <property type="match status" value="1"/>
</dbReference>
<dbReference type="PANTHER" id="PTHR11109:SF7">
    <property type="entry name" value="GTP CYCLOHYDROLASE 1"/>
    <property type="match status" value="1"/>
</dbReference>
<dbReference type="PANTHER" id="PTHR11109">
    <property type="entry name" value="GTP CYCLOHYDROLASE I"/>
    <property type="match status" value="1"/>
</dbReference>
<dbReference type="Pfam" id="PF01227">
    <property type="entry name" value="GTP_cyclohydroI"/>
    <property type="match status" value="1"/>
</dbReference>
<dbReference type="SUPFAM" id="SSF55620">
    <property type="entry name" value="Tetrahydrobiopterin biosynthesis enzymes-like"/>
    <property type="match status" value="1"/>
</dbReference>
<dbReference type="PROSITE" id="PS00859">
    <property type="entry name" value="GTP_CYCLOHYDROL_1_1"/>
    <property type="match status" value="1"/>
</dbReference>
<dbReference type="PROSITE" id="PS00860">
    <property type="entry name" value="GTP_CYCLOHYDROL_1_2"/>
    <property type="match status" value="1"/>
</dbReference>
<feature type="initiator methionine" description="Removed" evidence="1">
    <location>
        <position position="1"/>
    </location>
</feature>
<feature type="chain" id="PRO_0000119440" description="GTP cyclohydrolase 1">
    <location>
        <begin position="2"/>
        <end position="222"/>
    </location>
</feature>
<feature type="binding site" evidence="2">
    <location>
        <position position="111"/>
    </location>
    <ligand>
        <name>Zn(2+)</name>
        <dbReference type="ChEBI" id="CHEBI:29105"/>
    </ligand>
</feature>
<feature type="binding site" evidence="2">
    <location>
        <position position="114"/>
    </location>
    <ligand>
        <name>Zn(2+)</name>
        <dbReference type="ChEBI" id="CHEBI:29105"/>
    </ligand>
</feature>
<feature type="binding site" evidence="2">
    <location>
        <position position="182"/>
    </location>
    <ligand>
        <name>Zn(2+)</name>
        <dbReference type="ChEBI" id="CHEBI:29105"/>
    </ligand>
</feature>
<evidence type="ECO:0000250" key="1"/>
<evidence type="ECO:0000255" key="2">
    <source>
        <dbReference type="HAMAP-Rule" id="MF_00223"/>
    </source>
</evidence>
<proteinExistence type="inferred from homology"/>
<protein>
    <recommendedName>
        <fullName evidence="2">GTP cyclohydrolase 1</fullName>
        <ecNumber evidence="2">3.5.4.16</ecNumber>
    </recommendedName>
    <alternativeName>
        <fullName evidence="2">GTP cyclohydrolase I</fullName>
        <shortName evidence="2">GTP-CH-I</shortName>
    </alternativeName>
</protein>
<accession>P64209</accession>
<accession>Q8XFN8</accession>
<gene>
    <name evidence="2" type="primary">folE</name>
    <name type="ordered locus">STM2193</name>
</gene>
<comment type="catalytic activity">
    <reaction evidence="2">
        <text>GTP + H2O = 7,8-dihydroneopterin 3'-triphosphate + formate + H(+)</text>
        <dbReference type="Rhea" id="RHEA:17473"/>
        <dbReference type="ChEBI" id="CHEBI:15377"/>
        <dbReference type="ChEBI" id="CHEBI:15378"/>
        <dbReference type="ChEBI" id="CHEBI:15740"/>
        <dbReference type="ChEBI" id="CHEBI:37565"/>
        <dbReference type="ChEBI" id="CHEBI:58462"/>
        <dbReference type="EC" id="3.5.4.16"/>
    </reaction>
</comment>
<comment type="activity regulation">
    <text evidence="1">Allosteric enzyme. Activity is modulated by K(+), divalent cations, UTP, and tetrahydrobiopterin. Tetrahydrobiopterin is an inhibitor of this enzyme (By similarity).</text>
</comment>
<comment type="pathway">
    <text evidence="2">Cofactor biosynthesis; 7,8-dihydroneopterin triphosphate biosynthesis; 7,8-dihydroneopterin triphosphate from GTP: step 1/1.</text>
</comment>
<comment type="subunit">
    <text evidence="1">Toroid-shaped homodecamer, composed of two pentamers of five dimers.</text>
</comment>
<comment type="similarity">
    <text evidence="2">Belongs to the GTP cyclohydrolase I family.</text>
</comment>
<organism>
    <name type="scientific">Salmonella typhimurium (strain LT2 / SGSC1412 / ATCC 700720)</name>
    <dbReference type="NCBI Taxonomy" id="99287"/>
    <lineage>
        <taxon>Bacteria</taxon>
        <taxon>Pseudomonadati</taxon>
        <taxon>Pseudomonadota</taxon>
        <taxon>Gammaproteobacteria</taxon>
        <taxon>Enterobacterales</taxon>
        <taxon>Enterobacteriaceae</taxon>
        <taxon>Salmonella</taxon>
    </lineage>
</organism>
<keyword id="KW-0021">Allosteric enzyme</keyword>
<keyword id="KW-0342">GTP-binding</keyword>
<keyword id="KW-0378">Hydrolase</keyword>
<keyword id="KW-0479">Metal-binding</keyword>
<keyword id="KW-0547">Nucleotide-binding</keyword>
<keyword id="KW-0554">One-carbon metabolism</keyword>
<keyword id="KW-1185">Reference proteome</keyword>
<keyword id="KW-0862">Zinc</keyword>
<name>GCH1_SALTY</name>
<reference key="1">
    <citation type="journal article" date="2001" name="Nature">
        <title>Complete genome sequence of Salmonella enterica serovar Typhimurium LT2.</title>
        <authorList>
            <person name="McClelland M."/>
            <person name="Sanderson K.E."/>
            <person name="Spieth J."/>
            <person name="Clifton S.W."/>
            <person name="Latreille P."/>
            <person name="Courtney L."/>
            <person name="Porwollik S."/>
            <person name="Ali J."/>
            <person name="Dante M."/>
            <person name="Du F."/>
            <person name="Hou S."/>
            <person name="Layman D."/>
            <person name="Leonard S."/>
            <person name="Nguyen C."/>
            <person name="Scott K."/>
            <person name="Holmes A."/>
            <person name="Grewal N."/>
            <person name="Mulvaney E."/>
            <person name="Ryan E."/>
            <person name="Sun H."/>
            <person name="Florea L."/>
            <person name="Miller W."/>
            <person name="Stoneking T."/>
            <person name="Nhan M."/>
            <person name="Waterston R."/>
            <person name="Wilson R.K."/>
        </authorList>
    </citation>
    <scope>NUCLEOTIDE SEQUENCE [LARGE SCALE GENOMIC DNA]</scope>
    <source>
        <strain>LT2 / SGSC1412 / ATCC 700720</strain>
    </source>
</reference>
<sequence>MPSLSKEAALVHDALVARGLETPLRPPMDELDNETRKSLIAGHMTEIMQLLNLDLSDDSLMETPHRIAKMYVDEIFAGLDYANFPKITLIENKMKVDEMVTVRDITLTSTCEHHFVTIDGKATVAYIPKDSVIGLSKINRIVQFFAQRPQVQERLTQQILTALQTLLGTNNVAVSIDAVHYCVKARGIRDATSATTTTSLGGLFKSSQNTRQEFLRAVRHHP</sequence>